<feature type="signal peptide" evidence="2">
    <location>
        <begin position="1"/>
        <end position="28"/>
    </location>
</feature>
<feature type="chain" id="PRO_0000024874" description="Probable pectate lyase 10">
    <location>
        <begin position="29"/>
        <end position="440"/>
    </location>
</feature>
<feature type="region of interest" description="Disordered" evidence="3">
    <location>
        <begin position="32"/>
        <end position="56"/>
    </location>
</feature>
<feature type="active site" evidence="2">
    <location>
        <position position="318"/>
    </location>
</feature>
<feature type="binding site" evidence="1">
    <location>
        <position position="238"/>
    </location>
    <ligand>
        <name>Ca(2+)</name>
        <dbReference type="ChEBI" id="CHEBI:29108"/>
    </ligand>
</feature>
<feature type="binding site" evidence="1">
    <location>
        <position position="262"/>
    </location>
    <ligand>
        <name>Ca(2+)</name>
        <dbReference type="ChEBI" id="CHEBI:29108"/>
    </ligand>
</feature>
<feature type="binding site" evidence="1">
    <location>
        <position position="266"/>
    </location>
    <ligand>
        <name>Ca(2+)</name>
        <dbReference type="ChEBI" id="CHEBI:29108"/>
    </ligand>
</feature>
<feature type="glycosylation site" description="N-linked (GlcNAc...) asparagine" evidence="2">
    <location>
        <position position="41"/>
    </location>
</feature>
<feature type="glycosylation site" description="N-linked (GlcNAc...) asparagine" evidence="2">
    <location>
        <position position="76"/>
    </location>
</feature>
<proteinExistence type="evidence at transcript level"/>
<accession>Q9LJ42</accession>
<accession>Q8GXJ2</accession>
<dbReference type="EC" id="4.2.2.2"/>
<dbReference type="EMBL" id="AP000740">
    <property type="protein sequence ID" value="BAB01216.1"/>
    <property type="status" value="ALT_SEQ"/>
    <property type="molecule type" value="Genomic_DNA"/>
</dbReference>
<dbReference type="EMBL" id="CP002686">
    <property type="protein sequence ID" value="AEE76935.1"/>
    <property type="molecule type" value="Genomic_DNA"/>
</dbReference>
<dbReference type="EMBL" id="AK118210">
    <property type="protein sequence ID" value="BAC42832.1"/>
    <property type="status" value="ALT_INIT"/>
    <property type="molecule type" value="mRNA"/>
</dbReference>
<dbReference type="RefSeq" id="NP_189110.1">
    <property type="nucleotide sequence ID" value="NM_113378.2"/>
</dbReference>
<dbReference type="SMR" id="Q9LJ42"/>
<dbReference type="FunCoup" id="Q9LJ42">
    <property type="interactions" value="108"/>
</dbReference>
<dbReference type="STRING" id="3702.Q9LJ42"/>
<dbReference type="CAZy" id="PL1">
    <property type="family name" value="Polysaccharide Lyase Family 1"/>
</dbReference>
<dbReference type="GlyGen" id="Q9LJ42">
    <property type="glycosylation" value="2 sites"/>
</dbReference>
<dbReference type="PaxDb" id="3702-AT3G24670.1"/>
<dbReference type="ProteomicsDB" id="226187"/>
<dbReference type="EnsemblPlants" id="AT3G24670.1">
    <property type="protein sequence ID" value="AT3G24670.1"/>
    <property type="gene ID" value="AT3G24670"/>
</dbReference>
<dbReference type="GeneID" id="822063"/>
<dbReference type="Gramene" id="AT3G24670.1">
    <property type="protein sequence ID" value="AT3G24670.1"/>
    <property type="gene ID" value="AT3G24670"/>
</dbReference>
<dbReference type="KEGG" id="ath:AT3G24670"/>
<dbReference type="Araport" id="AT3G24670"/>
<dbReference type="TAIR" id="AT3G24670"/>
<dbReference type="eggNOG" id="ENOG502QQ5F">
    <property type="taxonomic scope" value="Eukaryota"/>
</dbReference>
<dbReference type="HOGENOM" id="CLU_026608_0_1_1"/>
<dbReference type="InParanoid" id="Q9LJ42"/>
<dbReference type="OMA" id="YMTHHNE"/>
<dbReference type="OrthoDB" id="1637350at2759"/>
<dbReference type="PhylomeDB" id="Q9LJ42"/>
<dbReference type="BioCyc" id="ARA:AT3G24670-MONOMER"/>
<dbReference type="UniPathway" id="UPA00545">
    <property type="reaction ID" value="UER00824"/>
</dbReference>
<dbReference type="PRO" id="PR:Q9LJ42"/>
<dbReference type="Proteomes" id="UP000006548">
    <property type="component" value="Chromosome 3"/>
</dbReference>
<dbReference type="ExpressionAtlas" id="Q9LJ42">
    <property type="expression patterns" value="baseline and differential"/>
</dbReference>
<dbReference type="GO" id="GO:0046872">
    <property type="term" value="F:metal ion binding"/>
    <property type="evidence" value="ECO:0007669"/>
    <property type="project" value="UniProtKB-KW"/>
</dbReference>
<dbReference type="GO" id="GO:0030570">
    <property type="term" value="F:pectate lyase activity"/>
    <property type="evidence" value="ECO:0007669"/>
    <property type="project" value="UniProtKB-EC"/>
</dbReference>
<dbReference type="GO" id="GO:0045490">
    <property type="term" value="P:pectin catabolic process"/>
    <property type="evidence" value="ECO:0007669"/>
    <property type="project" value="UniProtKB-UniPathway"/>
</dbReference>
<dbReference type="FunFam" id="2.160.20.10:FF:000009">
    <property type="entry name" value="Pectate lyase"/>
    <property type="match status" value="1"/>
</dbReference>
<dbReference type="Gene3D" id="2.160.20.10">
    <property type="entry name" value="Single-stranded right-handed beta-helix, Pectin lyase-like"/>
    <property type="match status" value="1"/>
</dbReference>
<dbReference type="InterPro" id="IPR018082">
    <property type="entry name" value="AmbAllergen"/>
</dbReference>
<dbReference type="InterPro" id="IPR002022">
    <property type="entry name" value="Pec_lyase"/>
</dbReference>
<dbReference type="InterPro" id="IPR012334">
    <property type="entry name" value="Pectin_lyas_fold"/>
</dbReference>
<dbReference type="InterPro" id="IPR011050">
    <property type="entry name" value="Pectin_lyase_fold/virulence"/>
</dbReference>
<dbReference type="InterPro" id="IPR045032">
    <property type="entry name" value="PEL"/>
</dbReference>
<dbReference type="PANTHER" id="PTHR31683:SF112">
    <property type="entry name" value="PECTATE LYASE 10-RELATED"/>
    <property type="match status" value="1"/>
</dbReference>
<dbReference type="PANTHER" id="PTHR31683">
    <property type="entry name" value="PECTATE LYASE 18-RELATED"/>
    <property type="match status" value="1"/>
</dbReference>
<dbReference type="Pfam" id="PF00544">
    <property type="entry name" value="Pectate_lyase_4"/>
    <property type="match status" value="1"/>
</dbReference>
<dbReference type="PRINTS" id="PR00807">
    <property type="entry name" value="AMBALLERGEN"/>
</dbReference>
<dbReference type="SMART" id="SM00656">
    <property type="entry name" value="Amb_all"/>
    <property type="match status" value="1"/>
</dbReference>
<dbReference type="SUPFAM" id="SSF51126">
    <property type="entry name" value="Pectin lyase-like"/>
    <property type="match status" value="1"/>
</dbReference>
<evidence type="ECO:0000250" key="1"/>
<evidence type="ECO:0000255" key="2"/>
<evidence type="ECO:0000256" key="3">
    <source>
        <dbReference type="SAM" id="MobiDB-lite"/>
    </source>
</evidence>
<evidence type="ECO:0000305" key="4"/>
<reference key="1">
    <citation type="journal article" date="2000" name="DNA Res.">
        <title>Structural analysis of Arabidopsis thaliana chromosome 3. II. Sequence features of the 4,251,695 bp regions covered by 90 P1, TAC and BAC clones.</title>
        <authorList>
            <person name="Kaneko T."/>
            <person name="Katoh T."/>
            <person name="Sato S."/>
            <person name="Nakamura Y."/>
            <person name="Asamizu E."/>
            <person name="Tabata S."/>
        </authorList>
    </citation>
    <scope>NUCLEOTIDE SEQUENCE [LARGE SCALE GENOMIC DNA]</scope>
    <source>
        <strain>cv. Columbia</strain>
    </source>
</reference>
<reference key="2">
    <citation type="journal article" date="2017" name="Plant J.">
        <title>Araport11: a complete reannotation of the Arabidopsis thaliana reference genome.</title>
        <authorList>
            <person name="Cheng C.Y."/>
            <person name="Krishnakumar V."/>
            <person name="Chan A.P."/>
            <person name="Thibaud-Nissen F."/>
            <person name="Schobel S."/>
            <person name="Town C.D."/>
        </authorList>
    </citation>
    <scope>GENOME REANNOTATION</scope>
    <source>
        <strain>cv. Columbia</strain>
    </source>
</reference>
<reference key="3">
    <citation type="journal article" date="2002" name="Science">
        <title>Functional annotation of a full-length Arabidopsis cDNA collection.</title>
        <authorList>
            <person name="Seki M."/>
            <person name="Narusaka M."/>
            <person name="Kamiya A."/>
            <person name="Ishida J."/>
            <person name="Satou M."/>
            <person name="Sakurai T."/>
            <person name="Nakajima M."/>
            <person name="Enju A."/>
            <person name="Akiyama K."/>
            <person name="Oono Y."/>
            <person name="Muramatsu M."/>
            <person name="Hayashizaki Y."/>
            <person name="Kawai J."/>
            <person name="Carninci P."/>
            <person name="Itoh M."/>
            <person name="Ishii Y."/>
            <person name="Arakawa T."/>
            <person name="Shibata K."/>
            <person name="Shinagawa A."/>
            <person name="Shinozaki K."/>
        </authorList>
    </citation>
    <scope>NUCLEOTIDE SEQUENCE [LARGE SCALE MRNA] OF 94-440</scope>
    <source>
        <strain>cv. Columbia</strain>
    </source>
</reference>
<keyword id="KW-0106">Calcium</keyword>
<keyword id="KW-0325">Glycoprotein</keyword>
<keyword id="KW-0456">Lyase</keyword>
<keyword id="KW-0479">Metal-binding</keyword>
<keyword id="KW-1185">Reference proteome</keyword>
<keyword id="KW-0732">Signal</keyword>
<protein>
    <recommendedName>
        <fullName>Probable pectate lyase 10</fullName>
        <ecNumber>4.2.2.2</ecNumber>
    </recommendedName>
</protein>
<name>PLY10_ARATH</name>
<gene>
    <name type="ordered locus">At3g24670</name>
    <name type="ORF">MSD24.10</name>
    <name type="ORF">MSD24_7</name>
</gene>
<organism>
    <name type="scientific">Arabidopsis thaliana</name>
    <name type="common">Mouse-ear cress</name>
    <dbReference type="NCBI Taxonomy" id="3702"/>
    <lineage>
        <taxon>Eukaryota</taxon>
        <taxon>Viridiplantae</taxon>
        <taxon>Streptophyta</taxon>
        <taxon>Embryophyta</taxon>
        <taxon>Tracheophyta</taxon>
        <taxon>Spermatophyta</taxon>
        <taxon>Magnoliopsida</taxon>
        <taxon>eudicotyledons</taxon>
        <taxon>Gunneridae</taxon>
        <taxon>Pentapetalae</taxon>
        <taxon>rosids</taxon>
        <taxon>malvids</taxon>
        <taxon>Brassicales</taxon>
        <taxon>Brassicaceae</taxon>
        <taxon>Camelineae</taxon>
        <taxon>Arabidopsis</taxon>
    </lineage>
</organism>
<comment type="catalytic activity">
    <reaction>
        <text>Eliminative cleavage of (1-&gt;4)-alpha-D-galacturonan to give oligosaccharides with 4-deoxy-alpha-D-galact-4-enuronosyl groups at their non-reducing ends.</text>
        <dbReference type="EC" id="4.2.2.2"/>
    </reaction>
</comment>
<comment type="cofactor">
    <cofactor evidence="1">
        <name>Ca(2+)</name>
        <dbReference type="ChEBI" id="CHEBI:29108"/>
    </cofactor>
    <text evidence="1">Binds 1 Ca(2+) ion. Required for its activity.</text>
</comment>
<comment type="pathway">
    <text>Glycan metabolism; pectin degradation; 2-dehydro-3-deoxy-D-gluconate from pectin: step 2/5.</text>
</comment>
<comment type="similarity">
    <text evidence="4">Belongs to the polysaccharide lyase 1 family.</text>
</comment>
<comment type="sequence caution" evidence="4">
    <conflict type="erroneous gene model prediction">
        <sequence resource="EMBL-CDS" id="BAB01216"/>
    </conflict>
</comment>
<comment type="sequence caution" evidence="4">
    <conflict type="erroneous initiation">
        <sequence resource="EMBL-CDS" id="BAC42832"/>
    </conflict>
</comment>
<sequence length="440" mass="48761">MVIFSRSFLALSTTLIILALCINSSTMAQETEDLNSHSSSNSSTANKLPNDDGAWNEHAVKNPEEVAAMVDMKIKNSTERRRLGFFSCATGNPIDDCWRCDRNWHLRRKRLANCAIGFGRNAIGGRDGRYYVVTDPSDHDAVNPRPGTLRHAVIQDRPLWIVFKRDMVITLTQELIMNSFKTIDGRGVNVAIAGGACITIQYVTNIIIHGINVHDCRRTGNAMVRSSPSHYGWRTMADGDAISIFGSSHIWIDHNSLSNCADGLIDAIMGSTAITISNNYMTHHNEVMLMGHSDSYTRDKLMQVTIAYNHFGEGLIQRMPRCRHGYFHVVNNDYTHWVMYAIGGSANPTINSQGNRFLAPGNPFAKEVTKRVGSWQGEWKQWNWRSQGDLMLNGAYFTKSGAAAPASYARASSLGAKPASVVSMLTYSSGALKCRIGMRC</sequence>